<dbReference type="EMBL" id="BA000050">
    <property type="protein sequence ID" value="BAE58399.1"/>
    <property type="molecule type" value="Genomic_DNA"/>
</dbReference>
<dbReference type="RefSeq" id="XP_001820401.1">
    <property type="nucleotide sequence ID" value="XM_001820349.2"/>
</dbReference>
<dbReference type="SMR" id="Q2UJ66"/>
<dbReference type="STRING" id="510516.Q2UJ66"/>
<dbReference type="EnsemblFungi" id="BAE58399">
    <property type="protein sequence ID" value="BAE58399"/>
    <property type="gene ID" value="AO090003001339"/>
</dbReference>
<dbReference type="GeneID" id="5992384"/>
<dbReference type="KEGG" id="aor:AO090003001339"/>
<dbReference type="VEuPathDB" id="FungiDB:AO090003001339"/>
<dbReference type="HOGENOM" id="CLU_010916_2_0_1"/>
<dbReference type="OMA" id="EGYIFHA"/>
<dbReference type="OrthoDB" id="67561at5052"/>
<dbReference type="Proteomes" id="UP000006564">
    <property type="component" value="Chromosome 2"/>
</dbReference>
<dbReference type="GO" id="GO:0005634">
    <property type="term" value="C:nucleus"/>
    <property type="evidence" value="ECO:0007669"/>
    <property type="project" value="UniProtKB-SubCell"/>
</dbReference>
<dbReference type="GO" id="GO:0031515">
    <property type="term" value="C:tRNA (m1A) methyltransferase complex"/>
    <property type="evidence" value="ECO:0007669"/>
    <property type="project" value="InterPro"/>
</dbReference>
<dbReference type="GO" id="GO:0003723">
    <property type="term" value="F:RNA binding"/>
    <property type="evidence" value="ECO:0007669"/>
    <property type="project" value="UniProtKB-KW"/>
</dbReference>
<dbReference type="GO" id="GO:0030488">
    <property type="term" value="P:tRNA methylation"/>
    <property type="evidence" value="ECO:0007669"/>
    <property type="project" value="InterPro"/>
</dbReference>
<dbReference type="InterPro" id="IPR017423">
    <property type="entry name" value="TRM6"/>
</dbReference>
<dbReference type="PANTHER" id="PTHR12945">
    <property type="entry name" value="TRANSLATION INITIATION FACTOR EIF3-RELATED"/>
    <property type="match status" value="1"/>
</dbReference>
<dbReference type="PANTHER" id="PTHR12945:SF0">
    <property type="entry name" value="TRNA (ADENINE(58)-N(1))-METHYLTRANSFERASE NON-CATALYTIC SUBUNIT TRM6"/>
    <property type="match status" value="1"/>
</dbReference>
<dbReference type="Pfam" id="PF04189">
    <property type="entry name" value="Gcd10p"/>
    <property type="match status" value="1"/>
</dbReference>
<name>TRM6_ASPOR</name>
<keyword id="KW-0539">Nucleus</keyword>
<keyword id="KW-1185">Reference proteome</keyword>
<keyword id="KW-0694">RNA-binding</keyword>
<keyword id="KW-0819">tRNA processing</keyword>
<feature type="chain" id="PRO_0000256159" description="tRNA (adenine(58)-N(1))-methyltransferase non-catalytic subunit trm6">
    <location>
        <begin position="1"/>
        <end position="578"/>
    </location>
</feature>
<feature type="region of interest" description="Disordered" evidence="2">
    <location>
        <begin position="253"/>
        <end position="306"/>
    </location>
</feature>
<feature type="region of interest" description="Disordered" evidence="2">
    <location>
        <begin position="459"/>
        <end position="478"/>
    </location>
</feature>
<feature type="region of interest" description="Disordered" evidence="2">
    <location>
        <begin position="558"/>
        <end position="578"/>
    </location>
</feature>
<feature type="compositionally biased region" description="Basic and acidic residues" evidence="2">
    <location>
        <begin position="264"/>
        <end position="278"/>
    </location>
</feature>
<feature type="compositionally biased region" description="Polar residues" evidence="2">
    <location>
        <begin position="297"/>
        <end position="306"/>
    </location>
</feature>
<feature type="compositionally biased region" description="Polar residues" evidence="2">
    <location>
        <begin position="558"/>
        <end position="567"/>
    </location>
</feature>
<accession>Q2UJ66</accession>
<evidence type="ECO:0000250" key="1">
    <source>
        <dbReference type="UniProtKB" id="P41814"/>
    </source>
</evidence>
<evidence type="ECO:0000256" key="2">
    <source>
        <dbReference type="SAM" id="MobiDB-lite"/>
    </source>
</evidence>
<evidence type="ECO:0000305" key="3"/>
<gene>
    <name type="primary">trm6</name>
    <name type="ORF">AO090003001339</name>
</gene>
<protein>
    <recommendedName>
        <fullName>tRNA (adenine(58)-N(1))-methyltransferase non-catalytic subunit trm6</fullName>
    </recommendedName>
    <alternativeName>
        <fullName>tRNA(m1A58)-methyltransferase subunit trm6</fullName>
        <shortName>tRNA(m1A58)MTase subunit trm6</shortName>
    </alternativeName>
</protein>
<sequence>MHSYVRPNQFVALRLPSEFTKIQKIEPDSTVFLGKFGSFPANQIIGRPFYLTFEILDDADEKDGSCLRIIPAAELHAETLIAEGEGDGEELDTNEDGTPMRTNREIVDDASTQKLTWEEIEALKKESGGAGREIISKLLESHQTLDQKTSFSLAKYMLRKRRKYMKRFTVLPLDVSILTNHMMEDQGAARIMELRDEMVGLLGCWGNVHHGGDASLDEAIAAKPNGRYLVVDDTGGLVVAAMAERMGILYPHDGDEYEEQGSSDEPKKNEAEQAHDDEQPPTESSTHRPARPAHMSASGNSITVLHPNKQPNLSLLKYFGYSQDNPDETHPLHKHLKTISWLQLLDPNADPIYSEEPEIIPESELYTMKSNKRGAYYRKRNRWTRVQSVVNEARAGEFDGLIVATVMDPSSVLKYAVPLLAGSAHVAVYSPSIEPLTELSDLYSTAKKTAFINRRQQLREQKLQQSSDQPDANETELQDSDLSELMAEFYLDPTLLLAPTLQNSRVRPWQVLPGRTHPLMSMRGGAEGYIFHAVRVIPTQQTIQAAGNLSRKKRKVVTQETPTTAVDSGSGVDVEMKS</sequence>
<comment type="function">
    <text evidence="1">Substrate-binding subunit of tRNA (adenine-N(1)-)-methyltransferase, which catalyzes the formation of N(1)-methyladenine at position 58 (m1A58) in initiator methionyl-tRNA.</text>
</comment>
<comment type="subunit">
    <text evidence="1">Heterotetramer; composed of two copies of TRM6 and two copies of TRM61.</text>
</comment>
<comment type="subcellular location">
    <subcellularLocation>
        <location evidence="1">Nucleus</location>
    </subcellularLocation>
</comment>
<comment type="similarity">
    <text evidence="3">Belongs to the TRM6/GCD10 family.</text>
</comment>
<proteinExistence type="inferred from homology"/>
<organism>
    <name type="scientific">Aspergillus oryzae (strain ATCC 42149 / RIB 40)</name>
    <name type="common">Yellow koji mold</name>
    <dbReference type="NCBI Taxonomy" id="510516"/>
    <lineage>
        <taxon>Eukaryota</taxon>
        <taxon>Fungi</taxon>
        <taxon>Dikarya</taxon>
        <taxon>Ascomycota</taxon>
        <taxon>Pezizomycotina</taxon>
        <taxon>Eurotiomycetes</taxon>
        <taxon>Eurotiomycetidae</taxon>
        <taxon>Eurotiales</taxon>
        <taxon>Aspergillaceae</taxon>
        <taxon>Aspergillus</taxon>
        <taxon>Aspergillus subgen. Circumdati</taxon>
    </lineage>
</organism>
<reference key="1">
    <citation type="journal article" date="2005" name="Nature">
        <title>Genome sequencing and analysis of Aspergillus oryzae.</title>
        <authorList>
            <person name="Machida M."/>
            <person name="Asai K."/>
            <person name="Sano M."/>
            <person name="Tanaka T."/>
            <person name="Kumagai T."/>
            <person name="Terai G."/>
            <person name="Kusumoto K."/>
            <person name="Arima T."/>
            <person name="Akita O."/>
            <person name="Kashiwagi Y."/>
            <person name="Abe K."/>
            <person name="Gomi K."/>
            <person name="Horiuchi H."/>
            <person name="Kitamoto K."/>
            <person name="Kobayashi T."/>
            <person name="Takeuchi M."/>
            <person name="Denning D.W."/>
            <person name="Galagan J.E."/>
            <person name="Nierman W.C."/>
            <person name="Yu J."/>
            <person name="Archer D.B."/>
            <person name="Bennett J.W."/>
            <person name="Bhatnagar D."/>
            <person name="Cleveland T.E."/>
            <person name="Fedorova N.D."/>
            <person name="Gotoh O."/>
            <person name="Horikawa H."/>
            <person name="Hosoyama A."/>
            <person name="Ichinomiya M."/>
            <person name="Igarashi R."/>
            <person name="Iwashita K."/>
            <person name="Juvvadi P.R."/>
            <person name="Kato M."/>
            <person name="Kato Y."/>
            <person name="Kin T."/>
            <person name="Kokubun A."/>
            <person name="Maeda H."/>
            <person name="Maeyama N."/>
            <person name="Maruyama J."/>
            <person name="Nagasaki H."/>
            <person name="Nakajima T."/>
            <person name="Oda K."/>
            <person name="Okada K."/>
            <person name="Paulsen I."/>
            <person name="Sakamoto K."/>
            <person name="Sawano T."/>
            <person name="Takahashi M."/>
            <person name="Takase K."/>
            <person name="Terabayashi Y."/>
            <person name="Wortman J.R."/>
            <person name="Yamada O."/>
            <person name="Yamagata Y."/>
            <person name="Anazawa H."/>
            <person name="Hata Y."/>
            <person name="Koide Y."/>
            <person name="Komori T."/>
            <person name="Koyama Y."/>
            <person name="Minetoki T."/>
            <person name="Suharnan S."/>
            <person name="Tanaka A."/>
            <person name="Isono K."/>
            <person name="Kuhara S."/>
            <person name="Ogasawara N."/>
            <person name="Kikuchi H."/>
        </authorList>
    </citation>
    <scope>NUCLEOTIDE SEQUENCE [LARGE SCALE GENOMIC DNA]</scope>
    <source>
        <strain>ATCC 42149 / RIB 40</strain>
    </source>
</reference>